<feature type="chain" id="PRO_1000120688" description="Small ribosomal subunit protein eS1">
    <location>
        <begin position="1"/>
        <end position="197"/>
    </location>
</feature>
<evidence type="ECO:0000255" key="1">
    <source>
        <dbReference type="HAMAP-Rule" id="MF_00359"/>
    </source>
</evidence>
<evidence type="ECO:0000305" key="2"/>
<name>RS3A_METMJ</name>
<gene>
    <name evidence="1" type="primary">rps3ae</name>
    <name type="ordered locus">Memar_0427</name>
</gene>
<keyword id="KW-0687">Ribonucleoprotein</keyword>
<keyword id="KW-0689">Ribosomal protein</keyword>
<proteinExistence type="inferred from homology"/>
<dbReference type="EMBL" id="CP000562">
    <property type="protein sequence ID" value="ABN56360.1"/>
    <property type="molecule type" value="Genomic_DNA"/>
</dbReference>
<dbReference type="RefSeq" id="WP_011843270.1">
    <property type="nucleotide sequence ID" value="NC_009051.1"/>
</dbReference>
<dbReference type="SMR" id="A3CSL0"/>
<dbReference type="STRING" id="368407.Memar_0427"/>
<dbReference type="GeneID" id="4848423"/>
<dbReference type="KEGG" id="mem:Memar_0427"/>
<dbReference type="eggNOG" id="arCOG04186">
    <property type="taxonomic scope" value="Archaea"/>
</dbReference>
<dbReference type="HOGENOM" id="CLU_062507_1_0_2"/>
<dbReference type="OrthoDB" id="30639at2157"/>
<dbReference type="Proteomes" id="UP000002146">
    <property type="component" value="Chromosome"/>
</dbReference>
<dbReference type="GO" id="GO:1990904">
    <property type="term" value="C:ribonucleoprotein complex"/>
    <property type="evidence" value="ECO:0007669"/>
    <property type="project" value="UniProtKB-KW"/>
</dbReference>
<dbReference type="GO" id="GO:0005840">
    <property type="term" value="C:ribosome"/>
    <property type="evidence" value="ECO:0007669"/>
    <property type="project" value="UniProtKB-KW"/>
</dbReference>
<dbReference type="GO" id="GO:0003735">
    <property type="term" value="F:structural constituent of ribosome"/>
    <property type="evidence" value="ECO:0007669"/>
    <property type="project" value="InterPro"/>
</dbReference>
<dbReference type="GO" id="GO:0006412">
    <property type="term" value="P:translation"/>
    <property type="evidence" value="ECO:0007669"/>
    <property type="project" value="UniProtKB-UniRule"/>
</dbReference>
<dbReference type="HAMAP" id="MF_00359">
    <property type="entry name" value="Ribosomal_eS1"/>
    <property type="match status" value="1"/>
</dbReference>
<dbReference type="InterPro" id="IPR001593">
    <property type="entry name" value="Ribosomal_eS1"/>
</dbReference>
<dbReference type="InterPro" id="IPR030838">
    <property type="entry name" value="Ribosomal_eS1_arc"/>
</dbReference>
<dbReference type="NCBIfam" id="NF003142">
    <property type="entry name" value="PRK04057.1"/>
    <property type="match status" value="1"/>
</dbReference>
<dbReference type="Pfam" id="PF01015">
    <property type="entry name" value="Ribosomal_S3Ae"/>
    <property type="match status" value="1"/>
</dbReference>
<dbReference type="SMART" id="SM01397">
    <property type="entry name" value="Ribosomal_S3Ae"/>
    <property type="match status" value="1"/>
</dbReference>
<organism>
    <name type="scientific">Methanoculleus marisnigri (strain ATCC 35101 / DSM 1498 / JR1)</name>
    <dbReference type="NCBI Taxonomy" id="368407"/>
    <lineage>
        <taxon>Archaea</taxon>
        <taxon>Methanobacteriati</taxon>
        <taxon>Methanobacteriota</taxon>
        <taxon>Stenosarchaea group</taxon>
        <taxon>Methanomicrobia</taxon>
        <taxon>Methanomicrobiales</taxon>
        <taxon>Methanomicrobiaceae</taxon>
        <taxon>Methanoculleus</taxon>
    </lineage>
</organism>
<reference key="1">
    <citation type="journal article" date="2009" name="Stand. Genomic Sci.">
        <title>Complete genome sequence of Methanoculleus marisnigri Romesser et al. 1981 type strain JR1.</title>
        <authorList>
            <person name="Anderson I.J."/>
            <person name="Sieprawska-Lupa M."/>
            <person name="Lapidus A."/>
            <person name="Nolan M."/>
            <person name="Copeland A."/>
            <person name="Glavina Del Rio T."/>
            <person name="Tice H."/>
            <person name="Dalin E."/>
            <person name="Barry K."/>
            <person name="Saunders E."/>
            <person name="Han C."/>
            <person name="Brettin T."/>
            <person name="Detter J.C."/>
            <person name="Bruce D."/>
            <person name="Mikhailova N."/>
            <person name="Pitluck S."/>
            <person name="Hauser L."/>
            <person name="Land M."/>
            <person name="Lucas S."/>
            <person name="Richardson P."/>
            <person name="Whitman W.B."/>
            <person name="Kyrpides N.C."/>
        </authorList>
    </citation>
    <scope>NUCLEOTIDE SEQUENCE [LARGE SCALE GENOMIC DNA]</scope>
    <source>
        <strain>ATCC 35101 / DSM 1498 / JR1</strain>
    </source>
</reference>
<comment type="similarity">
    <text evidence="1">Belongs to the eukaryotic ribosomal protein eS1 family.</text>
</comment>
<protein>
    <recommendedName>
        <fullName evidence="1">Small ribosomal subunit protein eS1</fullName>
    </recommendedName>
    <alternativeName>
        <fullName evidence="2">30S ribosomal protein S3Ae</fullName>
    </alternativeName>
    <alternativeName>
        <fullName evidence="1">Ribosomal protein S1e</fullName>
    </alternativeName>
</protein>
<accession>A3CSL0</accession>
<sequence length="197" mass="22181">MARKKQVGRRLEGWKAKKWYRVYVPDAFGKAEIGDAISADPENMVGRIMTATLGEVVQDYSKSHIKMRFKINNVAGDAAYTEFVGHEVTRDYLRSMVKRRASRIDTIHPVVSKDKKLLRVTVVCLTLSRADQSQVHAVRQAISQALSARAAESDFETLVKDIVSGDMARDIFKAVKTIYPIRRVEITKSKLEQVAAV</sequence>